<dbReference type="EMBL" id="BA000019">
    <property type="protein sequence ID" value="BAB75154.1"/>
    <property type="molecule type" value="Genomic_DNA"/>
</dbReference>
<dbReference type="PIR" id="AH2237">
    <property type="entry name" value="AH2237"/>
</dbReference>
<dbReference type="SMR" id="Q8YRJ1"/>
<dbReference type="STRING" id="103690.gene:10495494"/>
<dbReference type="KEGG" id="ana:alr3455"/>
<dbReference type="eggNOG" id="COG0850">
    <property type="taxonomic scope" value="Bacteria"/>
</dbReference>
<dbReference type="Proteomes" id="UP000002483">
    <property type="component" value="Chromosome"/>
</dbReference>
<dbReference type="GO" id="GO:0000902">
    <property type="term" value="P:cell morphogenesis"/>
    <property type="evidence" value="ECO:0007669"/>
    <property type="project" value="InterPro"/>
</dbReference>
<dbReference type="GO" id="GO:0000917">
    <property type="term" value="P:division septum assembly"/>
    <property type="evidence" value="ECO:0007669"/>
    <property type="project" value="UniProtKB-KW"/>
</dbReference>
<dbReference type="GO" id="GO:1901891">
    <property type="term" value="P:regulation of cell septum assembly"/>
    <property type="evidence" value="ECO:0007669"/>
    <property type="project" value="InterPro"/>
</dbReference>
<dbReference type="Gene3D" id="2.160.20.70">
    <property type="match status" value="1"/>
</dbReference>
<dbReference type="HAMAP" id="MF_00267">
    <property type="entry name" value="MinC"/>
    <property type="match status" value="1"/>
</dbReference>
<dbReference type="InterPro" id="IPR016098">
    <property type="entry name" value="CAP/MinC_C"/>
</dbReference>
<dbReference type="InterPro" id="IPR013033">
    <property type="entry name" value="MinC"/>
</dbReference>
<dbReference type="InterPro" id="IPR036145">
    <property type="entry name" value="MinC_C_sf"/>
</dbReference>
<dbReference type="InterPro" id="IPR005526">
    <property type="entry name" value="Septum_form_inhib_MinC_C"/>
</dbReference>
<dbReference type="NCBIfam" id="NF001778">
    <property type="entry name" value="PRK00513.2-4"/>
    <property type="match status" value="1"/>
</dbReference>
<dbReference type="PANTHER" id="PTHR34108">
    <property type="entry name" value="SEPTUM SITE-DETERMINING PROTEIN MINC"/>
    <property type="match status" value="1"/>
</dbReference>
<dbReference type="PANTHER" id="PTHR34108:SF1">
    <property type="entry name" value="SEPTUM SITE-DETERMINING PROTEIN MINC"/>
    <property type="match status" value="1"/>
</dbReference>
<dbReference type="Pfam" id="PF03775">
    <property type="entry name" value="MinC_C"/>
    <property type="match status" value="1"/>
</dbReference>
<dbReference type="SUPFAM" id="SSF63848">
    <property type="entry name" value="Cell-division inhibitor MinC, C-terminal domain"/>
    <property type="match status" value="1"/>
</dbReference>
<accession>Q8YRJ1</accession>
<organism>
    <name type="scientific">Nostoc sp. (strain PCC 7120 / SAG 25.82 / UTEX 2576)</name>
    <dbReference type="NCBI Taxonomy" id="103690"/>
    <lineage>
        <taxon>Bacteria</taxon>
        <taxon>Bacillati</taxon>
        <taxon>Cyanobacteriota</taxon>
        <taxon>Cyanophyceae</taxon>
        <taxon>Nostocales</taxon>
        <taxon>Nostocaceae</taxon>
        <taxon>Nostoc</taxon>
    </lineage>
</organism>
<name>MINC_NOSS1</name>
<feature type="chain" id="PRO_0000189078" description="Probable septum site-determining protein MinC">
    <location>
        <begin position="1"/>
        <end position="366"/>
    </location>
</feature>
<feature type="region of interest" description="Unknown">
    <location>
        <begin position="1"/>
        <end position="59"/>
    </location>
</feature>
<feature type="region of interest" description="Disordered" evidence="2">
    <location>
        <begin position="1"/>
        <end position="42"/>
    </location>
</feature>
<feature type="region of interest" description="MinC domain">
    <location>
        <begin position="60"/>
        <end position="366"/>
    </location>
</feature>
<evidence type="ECO:0000250" key="1"/>
<evidence type="ECO:0000256" key="2">
    <source>
        <dbReference type="SAM" id="MobiDB-lite"/>
    </source>
</evidence>
<evidence type="ECO:0000305" key="3"/>
<comment type="function">
    <text evidence="1">Cell division inhibitor that blocks the formation of polar Z ring septums. Rapidly oscillates between the poles of the cell to destabilize FtsZ filaments that have formed before they mature into polar Z rings. Prevents FtsZ polymerization (By similarity).</text>
</comment>
<comment type="subunit">
    <text evidence="1">Interacts with MinD and FtsZ.</text>
</comment>
<comment type="similarity">
    <text evidence="3">In the C-terminal section; belongs to the MinC family.</text>
</comment>
<reference key="1">
    <citation type="journal article" date="2001" name="DNA Res.">
        <title>Complete genomic sequence of the filamentous nitrogen-fixing cyanobacterium Anabaena sp. strain PCC 7120.</title>
        <authorList>
            <person name="Kaneko T."/>
            <person name="Nakamura Y."/>
            <person name="Wolk C.P."/>
            <person name="Kuritz T."/>
            <person name="Sasamoto S."/>
            <person name="Watanabe A."/>
            <person name="Iriguchi M."/>
            <person name="Ishikawa A."/>
            <person name="Kawashima K."/>
            <person name="Kimura T."/>
            <person name="Kishida Y."/>
            <person name="Kohara M."/>
            <person name="Matsumoto M."/>
            <person name="Matsuno A."/>
            <person name="Muraki A."/>
            <person name="Nakazaki N."/>
            <person name="Shimpo S."/>
            <person name="Sugimoto M."/>
            <person name="Takazawa M."/>
            <person name="Yamada M."/>
            <person name="Yasuda M."/>
            <person name="Tabata S."/>
        </authorList>
    </citation>
    <scope>NUCLEOTIDE SEQUENCE [LARGE SCALE GENOMIC DNA]</scope>
    <source>
        <strain>PCC 7120 / SAG 25.82 / UTEX 2576</strain>
    </source>
</reference>
<proteinExistence type="inferred from homology"/>
<protein>
    <recommendedName>
        <fullName>Probable septum site-determining protein MinC</fullName>
    </recommendedName>
</protein>
<keyword id="KW-0131">Cell cycle</keyword>
<keyword id="KW-0132">Cell division</keyword>
<keyword id="KW-1185">Reference proteome</keyword>
<keyword id="KW-0717">Septation</keyword>
<gene>
    <name type="primary">minC</name>
    <name type="ordered locus">alr3455</name>
</gene>
<sequence>MTSDSAIPNLGSNSAFSDAESNSTVVNPKSNSTSPDAESNSVIPDAELNSVLQYLKLNAEVTNVESDAPMVDEQVNSAPAHINLPDLDLDLEPISPATDVNSNSGWLSLNSPESVVDNKVKNNIQVQLKTEAGRLLVVLPTELQVPATEFTWSDIWQQLKFRLNAGDRLRTRNTTVHLVAYDRLLDGRQLQQLAETFSEVQLQLKSVATSRRQTAIAAVTSGYSVEQLQPETILSSEPKATSTPQADALYLEMTIRSGVEIRHPGTVILLGDINPGGIVVADGDILVWGRLRGIAHAGAGGNRDCLIMSLQMEPTQLRIADAVARAPEKSPTHFFPEVAHITSQGIRIVRSTDFSRNQISKINQTP</sequence>